<keyword id="KW-0067">ATP-binding</keyword>
<keyword id="KW-0963">Cytoplasm</keyword>
<keyword id="KW-0275">Fatty acid biosynthesis</keyword>
<keyword id="KW-0276">Fatty acid metabolism</keyword>
<keyword id="KW-0444">Lipid biosynthesis</keyword>
<keyword id="KW-0443">Lipid metabolism</keyword>
<keyword id="KW-0547">Nucleotide-binding</keyword>
<keyword id="KW-0808">Transferase</keyword>
<sequence>MKTTFLDFEQPIAELEAKIEELRFVQDDSAVDISEEIERLSKKSQQLTKDLYANLSPWQVSQIARHPQRPYTLDYVAELFTDFHELHGDRAFADDLSIVGGLARFGGHPCMVIGHQKGRDTKERAARNFGMPRPEGYRKAERLMRLAEKFGLPIFTFVDTPGAYPGIGAEERGQSEAIGRNLYVMAELKTPIITTVIGEGGSGGALAIAVADTVMMLQFSTYSVISPEGCASILWKSAAKAPEAAEALGLTAHRLKALGLIDKIINEPLGGAHRDPKGMAALLRRALADSLRQFQGMSIDALRERRFERLMAYGKFKETTPGA</sequence>
<accession>Q1BHN9</accession>
<protein>
    <recommendedName>
        <fullName evidence="1">Acetyl-coenzyme A carboxylase carboxyl transferase subunit alpha</fullName>
        <shortName evidence="1">ACCase subunit alpha</shortName>
        <shortName evidence="1">Acetyl-CoA carboxylase carboxyltransferase subunit alpha</shortName>
        <ecNumber evidence="1">2.1.3.15</ecNumber>
    </recommendedName>
</protein>
<comment type="function">
    <text evidence="1">Component of the acetyl coenzyme A carboxylase (ACC) complex. First, biotin carboxylase catalyzes the carboxylation of biotin on its carrier protein (BCCP) and then the CO(2) group is transferred by the carboxyltransferase to acetyl-CoA to form malonyl-CoA.</text>
</comment>
<comment type="catalytic activity">
    <reaction evidence="1">
        <text>N(6)-carboxybiotinyl-L-lysyl-[protein] + acetyl-CoA = N(6)-biotinyl-L-lysyl-[protein] + malonyl-CoA</text>
        <dbReference type="Rhea" id="RHEA:54728"/>
        <dbReference type="Rhea" id="RHEA-COMP:10505"/>
        <dbReference type="Rhea" id="RHEA-COMP:10506"/>
        <dbReference type="ChEBI" id="CHEBI:57288"/>
        <dbReference type="ChEBI" id="CHEBI:57384"/>
        <dbReference type="ChEBI" id="CHEBI:83144"/>
        <dbReference type="ChEBI" id="CHEBI:83145"/>
        <dbReference type="EC" id="2.1.3.15"/>
    </reaction>
</comment>
<comment type="pathway">
    <text evidence="1">Lipid metabolism; malonyl-CoA biosynthesis; malonyl-CoA from acetyl-CoA: step 1/1.</text>
</comment>
<comment type="subunit">
    <text evidence="1">Acetyl-CoA carboxylase is a heterohexamer composed of biotin carboxyl carrier protein (AccB), biotin carboxylase (AccC) and two subunits each of ACCase subunit alpha (AccA) and ACCase subunit beta (AccD).</text>
</comment>
<comment type="subcellular location">
    <subcellularLocation>
        <location evidence="1">Cytoplasm</location>
    </subcellularLocation>
</comment>
<comment type="similarity">
    <text evidence="1">Belongs to the AccA family.</text>
</comment>
<reference key="1">
    <citation type="submission" date="2006-05" db="EMBL/GenBank/DDBJ databases">
        <title>Complete sequence of chromosome 3 of Burkholderia cenocepacia AU 1054.</title>
        <authorList>
            <consortium name="US DOE Joint Genome Institute"/>
            <person name="Copeland A."/>
            <person name="Lucas S."/>
            <person name="Lapidus A."/>
            <person name="Barry K."/>
            <person name="Detter J.C."/>
            <person name="Glavina del Rio T."/>
            <person name="Hammon N."/>
            <person name="Israni S."/>
            <person name="Dalin E."/>
            <person name="Tice H."/>
            <person name="Pitluck S."/>
            <person name="Chain P."/>
            <person name="Malfatti S."/>
            <person name="Shin M."/>
            <person name="Vergez L."/>
            <person name="Schmutz J."/>
            <person name="Larimer F."/>
            <person name="Land M."/>
            <person name="Hauser L."/>
            <person name="Kyrpides N."/>
            <person name="Lykidis A."/>
            <person name="LiPuma J.J."/>
            <person name="Konstantinidis K."/>
            <person name="Tiedje J.M."/>
            <person name="Richardson P."/>
        </authorList>
    </citation>
    <scope>NUCLEOTIDE SEQUENCE [LARGE SCALE GENOMIC DNA]</scope>
    <source>
        <strain>AU 1054</strain>
    </source>
</reference>
<name>ACCA_BURO1</name>
<feature type="chain" id="PRO_1000062585" description="Acetyl-coenzyme A carboxylase carboxyl transferase subunit alpha">
    <location>
        <begin position="1"/>
        <end position="323"/>
    </location>
</feature>
<feature type="domain" description="CoA carboxyltransferase C-terminal" evidence="2">
    <location>
        <begin position="39"/>
        <end position="293"/>
    </location>
</feature>
<dbReference type="EC" id="2.1.3.15" evidence="1"/>
<dbReference type="EMBL" id="CP000380">
    <property type="protein sequence ID" value="ABF80866.1"/>
    <property type="molecule type" value="Genomic_DNA"/>
</dbReference>
<dbReference type="SMR" id="Q1BHN9"/>
<dbReference type="HOGENOM" id="CLU_015486_0_2_4"/>
<dbReference type="UniPathway" id="UPA00655">
    <property type="reaction ID" value="UER00711"/>
</dbReference>
<dbReference type="GO" id="GO:0009317">
    <property type="term" value="C:acetyl-CoA carboxylase complex"/>
    <property type="evidence" value="ECO:0007669"/>
    <property type="project" value="InterPro"/>
</dbReference>
<dbReference type="GO" id="GO:0003989">
    <property type="term" value="F:acetyl-CoA carboxylase activity"/>
    <property type="evidence" value="ECO:0007669"/>
    <property type="project" value="InterPro"/>
</dbReference>
<dbReference type="GO" id="GO:0005524">
    <property type="term" value="F:ATP binding"/>
    <property type="evidence" value="ECO:0007669"/>
    <property type="project" value="UniProtKB-KW"/>
</dbReference>
<dbReference type="GO" id="GO:0016743">
    <property type="term" value="F:carboxyl- or carbamoyltransferase activity"/>
    <property type="evidence" value="ECO:0007669"/>
    <property type="project" value="UniProtKB-UniRule"/>
</dbReference>
<dbReference type="GO" id="GO:0006633">
    <property type="term" value="P:fatty acid biosynthetic process"/>
    <property type="evidence" value="ECO:0007669"/>
    <property type="project" value="UniProtKB-KW"/>
</dbReference>
<dbReference type="GO" id="GO:2001295">
    <property type="term" value="P:malonyl-CoA biosynthetic process"/>
    <property type="evidence" value="ECO:0007669"/>
    <property type="project" value="UniProtKB-UniRule"/>
</dbReference>
<dbReference type="Gene3D" id="3.90.226.10">
    <property type="entry name" value="2-enoyl-CoA Hydratase, Chain A, domain 1"/>
    <property type="match status" value="1"/>
</dbReference>
<dbReference type="HAMAP" id="MF_00823">
    <property type="entry name" value="AcetylCoA_CT_alpha"/>
    <property type="match status" value="1"/>
</dbReference>
<dbReference type="InterPro" id="IPR001095">
    <property type="entry name" value="Acetyl_CoA_COase_a_su"/>
</dbReference>
<dbReference type="InterPro" id="IPR029045">
    <property type="entry name" value="ClpP/crotonase-like_dom_sf"/>
</dbReference>
<dbReference type="InterPro" id="IPR011763">
    <property type="entry name" value="COA_CT_C"/>
</dbReference>
<dbReference type="NCBIfam" id="TIGR00513">
    <property type="entry name" value="accA"/>
    <property type="match status" value="1"/>
</dbReference>
<dbReference type="NCBIfam" id="NF041504">
    <property type="entry name" value="AccA_sub"/>
    <property type="match status" value="1"/>
</dbReference>
<dbReference type="NCBIfam" id="NF004344">
    <property type="entry name" value="PRK05724.1"/>
    <property type="match status" value="1"/>
</dbReference>
<dbReference type="PANTHER" id="PTHR42853">
    <property type="entry name" value="ACETYL-COENZYME A CARBOXYLASE CARBOXYL TRANSFERASE SUBUNIT ALPHA"/>
    <property type="match status" value="1"/>
</dbReference>
<dbReference type="PANTHER" id="PTHR42853:SF3">
    <property type="entry name" value="ACETYL-COENZYME A CARBOXYLASE CARBOXYL TRANSFERASE SUBUNIT ALPHA, CHLOROPLASTIC"/>
    <property type="match status" value="1"/>
</dbReference>
<dbReference type="Pfam" id="PF03255">
    <property type="entry name" value="ACCA"/>
    <property type="match status" value="1"/>
</dbReference>
<dbReference type="PRINTS" id="PR01069">
    <property type="entry name" value="ACCCTRFRASEA"/>
</dbReference>
<dbReference type="SUPFAM" id="SSF52096">
    <property type="entry name" value="ClpP/crotonase"/>
    <property type="match status" value="1"/>
</dbReference>
<dbReference type="PROSITE" id="PS50989">
    <property type="entry name" value="COA_CT_CTER"/>
    <property type="match status" value="1"/>
</dbReference>
<gene>
    <name evidence="1" type="primary">accA</name>
    <name type="ordered locus">Bcen_6001</name>
</gene>
<proteinExistence type="inferred from homology"/>
<organism>
    <name type="scientific">Burkholderia orbicola (strain AU 1054)</name>
    <dbReference type="NCBI Taxonomy" id="331271"/>
    <lineage>
        <taxon>Bacteria</taxon>
        <taxon>Pseudomonadati</taxon>
        <taxon>Pseudomonadota</taxon>
        <taxon>Betaproteobacteria</taxon>
        <taxon>Burkholderiales</taxon>
        <taxon>Burkholderiaceae</taxon>
        <taxon>Burkholderia</taxon>
        <taxon>Burkholderia cepacia complex</taxon>
        <taxon>Burkholderia orbicola</taxon>
    </lineage>
</organism>
<evidence type="ECO:0000255" key="1">
    <source>
        <dbReference type="HAMAP-Rule" id="MF_00823"/>
    </source>
</evidence>
<evidence type="ECO:0000255" key="2">
    <source>
        <dbReference type="PROSITE-ProRule" id="PRU01137"/>
    </source>
</evidence>